<feature type="chain" id="PRO_0000243060" description="Large ribosomal subunit protein uL5">
    <location>
        <begin position="1"/>
        <end position="179"/>
    </location>
</feature>
<keyword id="KW-0687">Ribonucleoprotein</keyword>
<keyword id="KW-0689">Ribosomal protein</keyword>
<keyword id="KW-0694">RNA-binding</keyword>
<keyword id="KW-0699">rRNA-binding</keyword>
<keyword id="KW-0820">tRNA-binding</keyword>
<sequence length="179" mass="20318">MAKLHDYYKDEVVNKLMTEFNYNSVMQVPRVEKITLNMGVGEAIADKKLLDNAAADLTAISGQKPLITKARKSVAGFKIRQGYPIGCKVTLRGERMWEFFERLITIAVPRIRDFRGLSAKSFDGRGNYSMGVREQIIFPEIDYDKVDRVRGLDITITTTAKSDEEGRALLAAFDFPFRK</sequence>
<dbReference type="EMBL" id="AE017220">
    <property type="protein sequence ID" value="AAX67268.1"/>
    <property type="molecule type" value="Genomic_DNA"/>
</dbReference>
<dbReference type="RefSeq" id="WP_001096206.1">
    <property type="nucleotide sequence ID" value="NC_006905.1"/>
</dbReference>
<dbReference type="SMR" id="Q57J44"/>
<dbReference type="GeneID" id="93751944"/>
<dbReference type="KEGG" id="sec:SCH_3362"/>
<dbReference type="HOGENOM" id="CLU_061015_2_1_6"/>
<dbReference type="Proteomes" id="UP000000538">
    <property type="component" value="Chromosome"/>
</dbReference>
<dbReference type="GO" id="GO:1990904">
    <property type="term" value="C:ribonucleoprotein complex"/>
    <property type="evidence" value="ECO:0007669"/>
    <property type="project" value="UniProtKB-KW"/>
</dbReference>
<dbReference type="GO" id="GO:0005840">
    <property type="term" value="C:ribosome"/>
    <property type="evidence" value="ECO:0007669"/>
    <property type="project" value="UniProtKB-KW"/>
</dbReference>
<dbReference type="GO" id="GO:0019843">
    <property type="term" value="F:rRNA binding"/>
    <property type="evidence" value="ECO:0007669"/>
    <property type="project" value="UniProtKB-UniRule"/>
</dbReference>
<dbReference type="GO" id="GO:0003735">
    <property type="term" value="F:structural constituent of ribosome"/>
    <property type="evidence" value="ECO:0007669"/>
    <property type="project" value="InterPro"/>
</dbReference>
<dbReference type="GO" id="GO:0000049">
    <property type="term" value="F:tRNA binding"/>
    <property type="evidence" value="ECO:0007669"/>
    <property type="project" value="UniProtKB-UniRule"/>
</dbReference>
<dbReference type="GO" id="GO:0006412">
    <property type="term" value="P:translation"/>
    <property type="evidence" value="ECO:0007669"/>
    <property type="project" value="UniProtKB-UniRule"/>
</dbReference>
<dbReference type="FunFam" id="3.30.1440.10:FF:000001">
    <property type="entry name" value="50S ribosomal protein L5"/>
    <property type="match status" value="1"/>
</dbReference>
<dbReference type="Gene3D" id="3.30.1440.10">
    <property type="match status" value="1"/>
</dbReference>
<dbReference type="HAMAP" id="MF_01333_B">
    <property type="entry name" value="Ribosomal_uL5_B"/>
    <property type="match status" value="1"/>
</dbReference>
<dbReference type="InterPro" id="IPR002132">
    <property type="entry name" value="Ribosomal_uL5"/>
</dbReference>
<dbReference type="InterPro" id="IPR020930">
    <property type="entry name" value="Ribosomal_uL5_bac-type"/>
</dbReference>
<dbReference type="InterPro" id="IPR031309">
    <property type="entry name" value="Ribosomal_uL5_C"/>
</dbReference>
<dbReference type="InterPro" id="IPR020929">
    <property type="entry name" value="Ribosomal_uL5_CS"/>
</dbReference>
<dbReference type="InterPro" id="IPR022803">
    <property type="entry name" value="Ribosomal_uL5_dom_sf"/>
</dbReference>
<dbReference type="InterPro" id="IPR031310">
    <property type="entry name" value="Ribosomal_uL5_N"/>
</dbReference>
<dbReference type="NCBIfam" id="NF000585">
    <property type="entry name" value="PRK00010.1"/>
    <property type="match status" value="1"/>
</dbReference>
<dbReference type="PANTHER" id="PTHR11994">
    <property type="entry name" value="60S RIBOSOMAL PROTEIN L11-RELATED"/>
    <property type="match status" value="1"/>
</dbReference>
<dbReference type="Pfam" id="PF00281">
    <property type="entry name" value="Ribosomal_L5"/>
    <property type="match status" value="1"/>
</dbReference>
<dbReference type="Pfam" id="PF00673">
    <property type="entry name" value="Ribosomal_L5_C"/>
    <property type="match status" value="1"/>
</dbReference>
<dbReference type="PIRSF" id="PIRSF002161">
    <property type="entry name" value="Ribosomal_L5"/>
    <property type="match status" value="1"/>
</dbReference>
<dbReference type="SUPFAM" id="SSF55282">
    <property type="entry name" value="RL5-like"/>
    <property type="match status" value="1"/>
</dbReference>
<dbReference type="PROSITE" id="PS00358">
    <property type="entry name" value="RIBOSOMAL_L5"/>
    <property type="match status" value="1"/>
</dbReference>
<protein>
    <recommendedName>
        <fullName evidence="1">Large ribosomal subunit protein uL5</fullName>
    </recommendedName>
    <alternativeName>
        <fullName evidence="2">50S ribosomal protein L5</fullName>
    </alternativeName>
</protein>
<comment type="function">
    <text evidence="1">This is one of the proteins that bind and probably mediate the attachment of the 5S RNA into the large ribosomal subunit, where it forms part of the central protuberance. In the 70S ribosome it contacts protein S13 of the 30S subunit (bridge B1b), connecting the 2 subunits; this bridge is implicated in subunit movement. Contacts the P site tRNA; the 5S rRNA and some of its associated proteins might help stabilize positioning of ribosome-bound tRNAs.</text>
</comment>
<comment type="subunit">
    <text evidence="1">Part of the 50S ribosomal subunit; part of the 5S rRNA/L5/L18/L25 subcomplex. Contacts the 5S rRNA and the P site tRNA. Forms a bridge to the 30S subunit in the 70S ribosome.</text>
</comment>
<comment type="similarity">
    <text evidence="1">Belongs to the universal ribosomal protein uL5 family.</text>
</comment>
<reference key="1">
    <citation type="journal article" date="2005" name="Nucleic Acids Res.">
        <title>The genome sequence of Salmonella enterica serovar Choleraesuis, a highly invasive and resistant zoonotic pathogen.</title>
        <authorList>
            <person name="Chiu C.-H."/>
            <person name="Tang P."/>
            <person name="Chu C."/>
            <person name="Hu S."/>
            <person name="Bao Q."/>
            <person name="Yu J."/>
            <person name="Chou Y.-Y."/>
            <person name="Wang H.-S."/>
            <person name="Lee Y.-S."/>
        </authorList>
    </citation>
    <scope>NUCLEOTIDE SEQUENCE [LARGE SCALE GENOMIC DNA]</scope>
    <source>
        <strain>SC-B67</strain>
    </source>
</reference>
<organism>
    <name type="scientific">Salmonella choleraesuis (strain SC-B67)</name>
    <dbReference type="NCBI Taxonomy" id="321314"/>
    <lineage>
        <taxon>Bacteria</taxon>
        <taxon>Pseudomonadati</taxon>
        <taxon>Pseudomonadota</taxon>
        <taxon>Gammaproteobacteria</taxon>
        <taxon>Enterobacterales</taxon>
        <taxon>Enterobacteriaceae</taxon>
        <taxon>Salmonella</taxon>
    </lineage>
</organism>
<accession>Q57J44</accession>
<gene>
    <name evidence="1" type="primary">rplE</name>
    <name type="ordered locus">SCH_3362</name>
</gene>
<name>RL5_SALCH</name>
<proteinExistence type="inferred from homology"/>
<evidence type="ECO:0000255" key="1">
    <source>
        <dbReference type="HAMAP-Rule" id="MF_01333"/>
    </source>
</evidence>
<evidence type="ECO:0000305" key="2"/>